<proteinExistence type="inferred from homology"/>
<organism>
    <name type="scientific">Saccharopolyspora erythraea (strain ATCC 11635 / DSM 40517 / JCM 4748 / NBRC 13426 / NCIMB 8594 / NRRL 2338)</name>
    <dbReference type="NCBI Taxonomy" id="405948"/>
    <lineage>
        <taxon>Bacteria</taxon>
        <taxon>Bacillati</taxon>
        <taxon>Actinomycetota</taxon>
        <taxon>Actinomycetes</taxon>
        <taxon>Pseudonocardiales</taxon>
        <taxon>Pseudonocardiaceae</taxon>
        <taxon>Saccharopolyspora</taxon>
    </lineage>
</organism>
<keyword id="KW-0963">Cytoplasm</keyword>
<keyword id="KW-0647">Proteasome</keyword>
<keyword id="KW-1185">Reference proteome</keyword>
<protein>
    <recommendedName>
        <fullName evidence="1">Proteasome subunit alpha</fullName>
    </recommendedName>
    <alternativeName>
        <fullName evidence="1">20S proteasome alpha subunit</fullName>
    </alternativeName>
    <alternativeName>
        <fullName evidence="1">Proteasome core protein PrcA</fullName>
    </alternativeName>
</protein>
<evidence type="ECO:0000255" key="1">
    <source>
        <dbReference type="HAMAP-Rule" id="MF_00289"/>
    </source>
</evidence>
<evidence type="ECO:0000256" key="2">
    <source>
        <dbReference type="SAM" id="MobiDB-lite"/>
    </source>
</evidence>
<gene>
    <name evidence="1" type="primary">prcA</name>
    <name type="ordered locus">SACE_2252</name>
</gene>
<feature type="chain" id="PRO_0000397171" description="Proteasome subunit alpha">
    <location>
        <begin position="1"/>
        <end position="256"/>
    </location>
</feature>
<feature type="region of interest" description="Disordered" evidence="2">
    <location>
        <begin position="226"/>
        <end position="256"/>
    </location>
</feature>
<feature type="compositionally biased region" description="Basic and acidic residues" evidence="2">
    <location>
        <begin position="245"/>
        <end position="256"/>
    </location>
</feature>
<name>PSA_SACEN</name>
<dbReference type="EMBL" id="AM420293">
    <property type="protein sequence ID" value="CAM01557.1"/>
    <property type="molecule type" value="Genomic_DNA"/>
</dbReference>
<dbReference type="RefSeq" id="WP_009945865.1">
    <property type="nucleotide sequence ID" value="NC_009142.1"/>
</dbReference>
<dbReference type="SMR" id="A4FBY2"/>
<dbReference type="STRING" id="405948.SACE_2252"/>
<dbReference type="KEGG" id="sen:SACE_2252"/>
<dbReference type="eggNOG" id="COG0638">
    <property type="taxonomic scope" value="Bacteria"/>
</dbReference>
<dbReference type="HOGENOM" id="CLU_071031_0_0_11"/>
<dbReference type="OrthoDB" id="9775643at2"/>
<dbReference type="UniPathway" id="UPA00997"/>
<dbReference type="Proteomes" id="UP000006728">
    <property type="component" value="Chromosome"/>
</dbReference>
<dbReference type="GO" id="GO:0005737">
    <property type="term" value="C:cytoplasm"/>
    <property type="evidence" value="ECO:0007669"/>
    <property type="project" value="UniProtKB-SubCell"/>
</dbReference>
<dbReference type="GO" id="GO:0019773">
    <property type="term" value="C:proteasome core complex, alpha-subunit complex"/>
    <property type="evidence" value="ECO:0007669"/>
    <property type="project" value="UniProtKB-UniRule"/>
</dbReference>
<dbReference type="GO" id="GO:0004298">
    <property type="term" value="F:threonine-type endopeptidase activity"/>
    <property type="evidence" value="ECO:0007669"/>
    <property type="project" value="InterPro"/>
</dbReference>
<dbReference type="GO" id="GO:0019941">
    <property type="term" value="P:modification-dependent protein catabolic process"/>
    <property type="evidence" value="ECO:0007669"/>
    <property type="project" value="UniProtKB-UniRule"/>
</dbReference>
<dbReference type="GO" id="GO:0010498">
    <property type="term" value="P:proteasomal protein catabolic process"/>
    <property type="evidence" value="ECO:0007669"/>
    <property type="project" value="UniProtKB-UniRule"/>
</dbReference>
<dbReference type="CDD" id="cd01906">
    <property type="entry name" value="proteasome_protease_HslV"/>
    <property type="match status" value="1"/>
</dbReference>
<dbReference type="Gene3D" id="3.60.20.10">
    <property type="entry name" value="Glutamine Phosphoribosylpyrophosphate, subunit 1, domain 1"/>
    <property type="match status" value="1"/>
</dbReference>
<dbReference type="HAMAP" id="MF_00289_B">
    <property type="entry name" value="Proteasome_A_B"/>
    <property type="match status" value="1"/>
</dbReference>
<dbReference type="InterPro" id="IPR029055">
    <property type="entry name" value="Ntn_hydrolases_N"/>
</dbReference>
<dbReference type="InterPro" id="IPR050115">
    <property type="entry name" value="Proteasome_alpha"/>
</dbReference>
<dbReference type="InterPro" id="IPR023332">
    <property type="entry name" value="Proteasome_alpha-type"/>
</dbReference>
<dbReference type="InterPro" id="IPR022296">
    <property type="entry name" value="Proteasome_asu_bac"/>
</dbReference>
<dbReference type="InterPro" id="IPR001353">
    <property type="entry name" value="Proteasome_sua/b"/>
</dbReference>
<dbReference type="NCBIfam" id="TIGR03691">
    <property type="entry name" value="20S_bact_alpha"/>
    <property type="match status" value="1"/>
</dbReference>
<dbReference type="PANTHER" id="PTHR11599">
    <property type="entry name" value="PROTEASOME SUBUNIT ALPHA/BETA"/>
    <property type="match status" value="1"/>
</dbReference>
<dbReference type="Pfam" id="PF00227">
    <property type="entry name" value="Proteasome"/>
    <property type="match status" value="1"/>
</dbReference>
<dbReference type="SUPFAM" id="SSF56235">
    <property type="entry name" value="N-terminal nucleophile aminohydrolases (Ntn hydrolases)"/>
    <property type="match status" value="1"/>
</dbReference>
<dbReference type="PROSITE" id="PS51475">
    <property type="entry name" value="PROTEASOME_ALPHA_2"/>
    <property type="match status" value="1"/>
</dbReference>
<accession>A4FBY2</accession>
<reference key="1">
    <citation type="journal article" date="2007" name="Nat. Biotechnol.">
        <title>Complete genome sequence of the erythromycin-producing bacterium Saccharopolyspora erythraea NRRL23338.</title>
        <authorList>
            <person name="Oliynyk M."/>
            <person name="Samborskyy M."/>
            <person name="Lester J.B."/>
            <person name="Mironenko T."/>
            <person name="Scott N."/>
            <person name="Dickens S."/>
            <person name="Haydock S.F."/>
            <person name="Leadlay P.F."/>
        </authorList>
    </citation>
    <scope>NUCLEOTIDE SEQUENCE [LARGE SCALE GENOMIC DNA]</scope>
    <source>
        <strain>ATCC 11635 / DSM 40517 / JCM 4748 / NBRC 13426 / NCIMB 8594 / NRRL 2338</strain>
    </source>
</reference>
<sequence>MTMPFYTSPEQLMRERSELARKGIARGRSVVVLKYAGGVLFVAENPSTTLHKVSEIYDRIGFAAVGRYSEFESLRVAGVRIADVRGYSYDRRDVTGRALANTYAQHLGAIFTEQIKPFEVEICVAEVGQTADNDQLYRLTYDGSIVDEPQYVVMGGQADTITTTLKDSFSDGLELAEAAGLAIRALSSGGEGTRELGVGQLEVAVLDRARPNRTFRRITGAALKALLPSQEESGSTDGEASGDAGDDKKTGDDKKS</sequence>
<comment type="function">
    <text evidence="1">Component of the proteasome core, a large protease complex with broad specificity involved in protein degradation.</text>
</comment>
<comment type="activity regulation">
    <text evidence="1">The formation of the proteasomal ATPase ARC-20S proteasome complex, likely via the docking of the C-termini of ARC into the intersubunit pockets in the alpha-rings, may trigger opening of the gate for substrate entry. Interconversion between the open-gate and close-gate conformations leads to a dynamic regulation of the 20S proteasome proteolysis activity.</text>
</comment>
<comment type="pathway">
    <text evidence="1">Protein degradation; proteasomal Pup-dependent pathway.</text>
</comment>
<comment type="subunit">
    <text evidence="1">The 20S proteasome core is composed of 14 alpha and 14 beta subunits that assemble into four stacked heptameric rings, resulting in a barrel-shaped structure. The two inner rings, each composed of seven catalytic beta subunits, are sandwiched by two outer rings, each composed of seven alpha subunits. The catalytic chamber with the active sites is on the inside of the barrel. Has a gated structure, the ends of the cylinder being occluded by the N-termini of the alpha-subunits. Is capped by the proteasome-associated ATPase, ARC.</text>
</comment>
<comment type="subcellular location">
    <subcellularLocation>
        <location evidence="1">Cytoplasm</location>
    </subcellularLocation>
</comment>
<comment type="similarity">
    <text evidence="1">Belongs to the peptidase T1A family.</text>
</comment>